<accession>Q5EP08</accession>
<reference evidence="5 6" key="1">
    <citation type="journal article" date="2005" name="Mol. Biol. Evol.">
        <title>Molecular evolutionary analyses of the odorant-binding protein gene Gp-9 in fire ants and other Solenopsis species.</title>
        <authorList>
            <person name="Krieger M.J.B."/>
            <person name="Ross K.G."/>
        </authorList>
    </citation>
    <scope>NUCLEOTIDE SEQUENCE [GENOMIC DNA] (ALLELE B)</scope>
</reference>
<sequence>MKTFVLHIFIFAFVAFASASRDSAKKIGSQYDNYETCLTEHGLTDDDIFSIGEVSSGQHKTNHEDTELHKNGCVMQCMLEKDGLMSGADYDEEKMREDYIKETGAQPGDQRIEALNTCMQETKDMEDKCDKSLILVACVLAAEAVLADSSEGA</sequence>
<keyword id="KW-0085">Behavior</keyword>
<keyword id="KW-1015">Disulfide bond</keyword>
<keyword id="KW-0589">Pheromone response</keyword>
<keyword id="KW-0590">Pheromone-binding</keyword>
<keyword id="KW-0964">Secreted</keyword>
<keyword id="KW-0732">Signal</keyword>
<keyword id="KW-0813">Transport</keyword>
<dbReference type="EMBL" id="AY818623">
    <property type="protein sequence ID" value="AAW80690.1"/>
    <property type="molecule type" value="Genomic_DNA"/>
</dbReference>
<dbReference type="SMR" id="Q5EP08"/>
<dbReference type="GO" id="GO:0005615">
    <property type="term" value="C:extracellular space"/>
    <property type="evidence" value="ECO:0000250"/>
    <property type="project" value="UniProtKB"/>
</dbReference>
<dbReference type="GO" id="GO:0005550">
    <property type="term" value="F:pheromone binding"/>
    <property type="evidence" value="ECO:0007669"/>
    <property type="project" value="UniProtKB-KW"/>
</dbReference>
<dbReference type="GO" id="GO:0019236">
    <property type="term" value="P:response to pheromone"/>
    <property type="evidence" value="ECO:0007669"/>
    <property type="project" value="UniProtKB-KW"/>
</dbReference>
<dbReference type="GO" id="GO:0035176">
    <property type="term" value="P:social behavior"/>
    <property type="evidence" value="ECO:0000250"/>
    <property type="project" value="UniProtKB"/>
</dbReference>
<dbReference type="CDD" id="cd23992">
    <property type="entry name" value="PBP_GOBP"/>
    <property type="match status" value="1"/>
</dbReference>
<dbReference type="FunFam" id="1.10.238.20:FF:000004">
    <property type="entry name" value="Pheromone-binding protein Gp-9"/>
    <property type="match status" value="1"/>
</dbReference>
<dbReference type="Gene3D" id="1.10.238.20">
    <property type="entry name" value="Pheromone/general odorant binding protein domain"/>
    <property type="match status" value="1"/>
</dbReference>
<dbReference type="InterPro" id="IPR006170">
    <property type="entry name" value="PBP/GOBP"/>
</dbReference>
<dbReference type="InterPro" id="IPR036728">
    <property type="entry name" value="PBP_GOBP_sf"/>
</dbReference>
<dbReference type="InterPro" id="IPR022354">
    <property type="entry name" value="Pheromone-bd_protein_Gp-9"/>
</dbReference>
<dbReference type="Pfam" id="PF01395">
    <property type="entry name" value="PBP_GOBP"/>
    <property type="match status" value="1"/>
</dbReference>
<dbReference type="PRINTS" id="PR02007">
    <property type="entry name" value="ODORANTBPGP9"/>
</dbReference>
<dbReference type="SUPFAM" id="SSF47565">
    <property type="entry name" value="Insect pheromone/odorant-binding proteins"/>
    <property type="match status" value="1"/>
</dbReference>
<name>PBGP9_SOLXY</name>
<evidence type="ECO:0000250" key="1"/>
<evidence type="ECO:0000250" key="2">
    <source>
        <dbReference type="UniProtKB" id="P20797"/>
    </source>
</evidence>
<evidence type="ECO:0000250" key="3">
    <source>
        <dbReference type="UniProtKB" id="Q8WP90"/>
    </source>
</evidence>
<evidence type="ECO:0000255" key="4"/>
<evidence type="ECO:0000305" key="5"/>
<evidence type="ECO:0000312" key="6">
    <source>
        <dbReference type="EMBL" id="AAW80690.1"/>
    </source>
</evidence>
<proteinExistence type="inferred from homology"/>
<organism>
    <name type="scientific">Solenopsis xyloni</name>
    <name type="common">Southern fire ant</name>
    <dbReference type="NCBI Taxonomy" id="310435"/>
    <lineage>
        <taxon>Eukaryota</taxon>
        <taxon>Metazoa</taxon>
        <taxon>Ecdysozoa</taxon>
        <taxon>Arthropoda</taxon>
        <taxon>Hexapoda</taxon>
        <taxon>Insecta</taxon>
        <taxon>Pterygota</taxon>
        <taxon>Neoptera</taxon>
        <taxon>Endopterygota</taxon>
        <taxon>Hymenoptera</taxon>
        <taxon>Apocrita</taxon>
        <taxon>Aculeata</taxon>
        <taxon>Formicoidea</taxon>
        <taxon>Formicidae</taxon>
        <taxon>Myrmicinae</taxon>
        <taxon>Solenopsis</taxon>
    </lineage>
</organism>
<protein>
    <recommendedName>
        <fullName>Pheromone-binding protein Gp-9</fullName>
        <shortName>PBP</shortName>
    </recommendedName>
    <alternativeName>
        <fullName>Putative odorant-binding protein Gp-9</fullName>
    </alternativeName>
</protein>
<gene>
    <name evidence="6" type="primary">Gp-9</name>
</gene>
<feature type="signal peptide" evidence="3">
    <location>
        <begin position="1"/>
        <end position="19"/>
    </location>
</feature>
<feature type="chain" id="PRO_5000094267" description="Pheromone-binding protein Gp-9" evidence="3">
    <location>
        <begin position="20"/>
        <end position="153"/>
    </location>
</feature>
<feature type="disulfide bond" evidence="2">
    <location>
        <begin position="37"/>
        <end position="77"/>
    </location>
</feature>
<feature type="disulfide bond" evidence="2">
    <location>
        <begin position="73"/>
        <end position="129"/>
    </location>
</feature>
<feature type="disulfide bond" evidence="2">
    <location>
        <begin position="118"/>
        <end position="138"/>
    </location>
</feature>
<comment type="function">
    <text evidence="3">Colony queen number, a major feature of social organization, is associated with worker genotype for Gp-9. Colonies are headed by either a single reproductive queen (monogyne form) or multiple queens (polygyne form). Differences in worker Gp-9 genotypes between social forms may cause differences in workers' abilities to recognize queens and regulate their numbers (By similarity).</text>
</comment>
<comment type="subunit">
    <text evidence="2">Homodimer.</text>
</comment>
<comment type="subcellular location">
    <subcellularLocation>
        <location evidence="1">Secreted</location>
    </subcellularLocation>
</comment>
<comment type="similarity">
    <text evidence="4">Belongs to the PBP/GOBP family.</text>
</comment>